<evidence type="ECO:0000255" key="1"/>
<evidence type="ECO:0000255" key="2">
    <source>
        <dbReference type="PROSITE-ProRule" id="PRU00498"/>
    </source>
</evidence>
<evidence type="ECO:0000255" key="3">
    <source>
        <dbReference type="PROSITE-ProRule" id="PRU00818"/>
    </source>
</evidence>
<evidence type="ECO:0000269" key="4">
    <source>
    </source>
</evidence>
<evidence type="ECO:0000269" key="5">
    <source>
    </source>
</evidence>
<evidence type="ECO:0000269" key="6">
    <source>
    </source>
</evidence>
<evidence type="ECO:0000269" key="7">
    <source>
    </source>
</evidence>
<evidence type="ECO:0000303" key="8">
    <source>
    </source>
</evidence>
<evidence type="ECO:0000303" key="9">
    <source>
    </source>
</evidence>
<evidence type="ECO:0000303" key="10">
    <source>
    </source>
</evidence>
<evidence type="ECO:0000305" key="11"/>
<evidence type="ECO:0000312" key="12">
    <source>
        <dbReference type="Araport" id="AT5G25090"/>
    </source>
</evidence>
<evidence type="ECO:0000312" key="13">
    <source>
        <dbReference type="EMBL" id="AC005964"/>
    </source>
</evidence>
<proteinExistence type="evidence at protein level"/>
<protein>
    <recommendedName>
        <fullName evidence="9">Early nodulin-like protein 13</fullName>
        <shortName evidence="9">AtENODL13</shortName>
    </recommendedName>
    <alternativeName>
        <fullName evidence="8">Early nodulin-like protein 3</fullName>
    </alternativeName>
    <alternativeName>
        <fullName evidence="11">Phytocyanin-like protein ENODL13</fullName>
    </alternativeName>
</protein>
<organism>
    <name type="scientific">Arabidopsis thaliana</name>
    <name type="common">Mouse-ear cress</name>
    <dbReference type="NCBI Taxonomy" id="3702"/>
    <lineage>
        <taxon>Eukaryota</taxon>
        <taxon>Viridiplantae</taxon>
        <taxon>Streptophyta</taxon>
        <taxon>Embryophyta</taxon>
        <taxon>Tracheophyta</taxon>
        <taxon>Spermatophyta</taxon>
        <taxon>Magnoliopsida</taxon>
        <taxon>eudicotyledons</taxon>
        <taxon>Gunneridae</taxon>
        <taxon>Pentapetalae</taxon>
        <taxon>rosids</taxon>
        <taxon>malvids</taxon>
        <taxon>Brassicales</taxon>
        <taxon>Brassicaceae</taxon>
        <taxon>Camelineae</taxon>
        <taxon>Arabidopsis</taxon>
    </lineage>
</organism>
<feature type="signal peptide" evidence="1">
    <location>
        <begin position="1"/>
        <end position="23"/>
    </location>
</feature>
<feature type="chain" id="PRO_0000002882" description="Early nodulin-like protein 13">
    <location>
        <begin position="24"/>
        <end position="165"/>
    </location>
</feature>
<feature type="propeptide" id="PRO_0000002883" description="Removed in mature form" evidence="1">
    <location>
        <begin position="166"/>
        <end position="186"/>
    </location>
</feature>
<feature type="domain" description="Phytocyanin" evidence="3">
    <location>
        <begin position="24"/>
        <end position="128"/>
    </location>
</feature>
<feature type="lipid moiety-binding region" description="GPI-anchor amidated alanine" evidence="1">
    <location>
        <position position="165"/>
    </location>
</feature>
<feature type="glycosylation site" description="N-linked (GlcNAc...) asparagine" evidence="2">
    <location>
        <position position="83"/>
    </location>
</feature>
<feature type="glycosylation site" description="N-linked (GlcNAc...) asparagine" evidence="2">
    <location>
        <position position="90"/>
    </location>
</feature>
<feature type="disulfide bond" evidence="3">
    <location>
        <begin position="82"/>
        <end position="116"/>
    </location>
</feature>
<feature type="sequence conflict" description="In Ref. 3; AAM63773." evidence="11" ref="3">
    <original>L</original>
    <variation>F</variation>
    <location>
        <position position="168"/>
    </location>
</feature>
<sequence>MAQRTLVATFFLIFFLLTNLVCSKEIIVGGKTSSWKIPSSPSESLNKWAESLRFRVGDTLVWKYDEEKDSVLQVTKDAYINCNTTNPAANYSNGDTKVKLERSGPYFFISGSKSNCVEGEKLHIVVMSSRGGHTGGFFTGSSPSPAPSPALLGAPTVAPASGGSASSLTRQVGVLGFVGLLAIVLL</sequence>
<accession>Q8LC95</accession>
<keyword id="KW-1003">Cell membrane</keyword>
<keyword id="KW-1015">Disulfide bond</keyword>
<keyword id="KW-0325">Glycoprotein</keyword>
<keyword id="KW-0336">GPI-anchor</keyword>
<keyword id="KW-0449">Lipoprotein</keyword>
<keyword id="KW-0472">Membrane</keyword>
<keyword id="KW-1185">Reference proteome</keyword>
<keyword id="KW-0732">Signal</keyword>
<name>ENL13_ARATH</name>
<comment type="function">
    <text evidence="7 10">May act as a carbohydrate transporter (PubMed:24470637). Required, together with ENODL11, ENODL12, ENODL13, ENODL14 and ENODL15, for male-female communication and pollen tube reception and burst at the synergid cell surface of the female gametophyte (PubMed:27524487).</text>
</comment>
<comment type="subcellular location">
    <subcellularLocation>
        <location evidence="1">Cell membrane</location>
        <topology evidence="4">Lipid-anchor</topology>
        <topology evidence="4">GPI-anchor</topology>
    </subcellularLocation>
</comment>
<comment type="tissue specificity">
    <text evidence="5 6">Mostly expressed in seedlings, siliques and flowers, and, to a lower extent, in roots, stems and seeds, but barely in leaves.</text>
</comment>
<comment type="developmental stage">
    <text evidence="5">In flowers, expressed only in developing ovules (e.g. in egg cells).</text>
</comment>
<comment type="disruption phenotype">
    <text evidence="7">No visible phenotype (PubMed:27524487). Plants lacking ENODL11, ENODL12, ENODL13, ENODL14 and ENODL15 have a reduced seed set due to aborted ovules as a result of pollen tubes failling to rupture and release their sperm cell cargo (PubMed:27524487).</text>
</comment>
<comment type="similarity">
    <text evidence="11">Belongs to the early nodulin-like (ENODL) family.</text>
</comment>
<reference key="1">
    <citation type="journal article" date="2000" name="Nature">
        <title>Sequence and analysis of chromosome 5 of the plant Arabidopsis thaliana.</title>
        <authorList>
            <person name="Tabata S."/>
            <person name="Kaneko T."/>
            <person name="Nakamura Y."/>
            <person name="Kotani H."/>
            <person name="Kato T."/>
            <person name="Asamizu E."/>
            <person name="Miyajima N."/>
            <person name="Sasamoto S."/>
            <person name="Kimura T."/>
            <person name="Hosouchi T."/>
            <person name="Kawashima K."/>
            <person name="Kohara M."/>
            <person name="Matsumoto M."/>
            <person name="Matsuno A."/>
            <person name="Muraki A."/>
            <person name="Nakayama S."/>
            <person name="Nakazaki N."/>
            <person name="Naruo K."/>
            <person name="Okumura S."/>
            <person name="Shinpo S."/>
            <person name="Takeuchi C."/>
            <person name="Wada T."/>
            <person name="Watanabe A."/>
            <person name="Yamada M."/>
            <person name="Yasuda M."/>
            <person name="Sato S."/>
            <person name="de la Bastide M."/>
            <person name="Huang E."/>
            <person name="Spiegel L."/>
            <person name="Gnoj L."/>
            <person name="O'Shaughnessy A."/>
            <person name="Preston R."/>
            <person name="Habermann K."/>
            <person name="Murray J."/>
            <person name="Johnson D."/>
            <person name="Rohlfing T."/>
            <person name="Nelson J."/>
            <person name="Stoneking T."/>
            <person name="Pepin K."/>
            <person name="Spieth J."/>
            <person name="Sekhon M."/>
            <person name="Armstrong J."/>
            <person name="Becker M."/>
            <person name="Belter E."/>
            <person name="Cordum H."/>
            <person name="Cordes M."/>
            <person name="Courtney L."/>
            <person name="Courtney W."/>
            <person name="Dante M."/>
            <person name="Du H."/>
            <person name="Edwards J."/>
            <person name="Fryman J."/>
            <person name="Haakensen B."/>
            <person name="Lamar E."/>
            <person name="Latreille P."/>
            <person name="Leonard S."/>
            <person name="Meyer R."/>
            <person name="Mulvaney E."/>
            <person name="Ozersky P."/>
            <person name="Riley A."/>
            <person name="Strowmatt C."/>
            <person name="Wagner-McPherson C."/>
            <person name="Wollam A."/>
            <person name="Yoakum M."/>
            <person name="Bell M."/>
            <person name="Dedhia N."/>
            <person name="Parnell L."/>
            <person name="Shah R."/>
            <person name="Rodriguez M."/>
            <person name="Hoon See L."/>
            <person name="Vil D."/>
            <person name="Baker J."/>
            <person name="Kirchoff K."/>
            <person name="Toth K."/>
            <person name="King L."/>
            <person name="Bahret A."/>
            <person name="Miller B."/>
            <person name="Marra M.A."/>
            <person name="Martienssen R."/>
            <person name="McCombie W.R."/>
            <person name="Wilson R.K."/>
            <person name="Murphy G."/>
            <person name="Bancroft I."/>
            <person name="Volckaert G."/>
            <person name="Wambutt R."/>
            <person name="Duesterhoeft A."/>
            <person name="Stiekema W."/>
            <person name="Pohl T."/>
            <person name="Entian K.-D."/>
            <person name="Terryn N."/>
            <person name="Hartley N."/>
            <person name="Bent E."/>
            <person name="Johnson S."/>
            <person name="Langham S.-A."/>
            <person name="McCullagh B."/>
            <person name="Robben J."/>
            <person name="Grymonprez B."/>
            <person name="Zimmermann W."/>
            <person name="Ramsperger U."/>
            <person name="Wedler H."/>
            <person name="Balke K."/>
            <person name="Wedler E."/>
            <person name="Peters S."/>
            <person name="van Staveren M."/>
            <person name="Dirkse W."/>
            <person name="Mooijman P."/>
            <person name="Klein Lankhorst R."/>
            <person name="Weitzenegger T."/>
            <person name="Bothe G."/>
            <person name="Rose M."/>
            <person name="Hauf J."/>
            <person name="Berneiser S."/>
            <person name="Hempel S."/>
            <person name="Feldpausch M."/>
            <person name="Lamberth S."/>
            <person name="Villarroel R."/>
            <person name="Gielen J."/>
            <person name="Ardiles W."/>
            <person name="Bents O."/>
            <person name="Lemcke K."/>
            <person name="Kolesov G."/>
            <person name="Mayer K.F.X."/>
            <person name="Rudd S."/>
            <person name="Schoof H."/>
            <person name="Schueller C."/>
            <person name="Zaccaria P."/>
            <person name="Mewes H.-W."/>
            <person name="Bevan M."/>
            <person name="Fransz P.F."/>
        </authorList>
    </citation>
    <scope>NUCLEOTIDE SEQUENCE [LARGE SCALE GENOMIC DNA]</scope>
    <source>
        <strain>cv. Columbia</strain>
    </source>
</reference>
<reference key="2">
    <citation type="journal article" date="2017" name="Plant J.">
        <title>Araport11: a complete reannotation of the Arabidopsis thaliana reference genome.</title>
        <authorList>
            <person name="Cheng C.Y."/>
            <person name="Krishnakumar V."/>
            <person name="Chan A.P."/>
            <person name="Thibaud-Nissen F."/>
            <person name="Schobel S."/>
            <person name="Town C.D."/>
        </authorList>
    </citation>
    <scope>GENOME REANNOTATION</scope>
    <source>
        <strain>cv. Columbia</strain>
    </source>
</reference>
<reference key="3">
    <citation type="submission" date="2002-03" db="EMBL/GenBank/DDBJ databases">
        <title>Full-length cDNA from Arabidopsis thaliana.</title>
        <authorList>
            <person name="Brover V.V."/>
            <person name="Troukhan M.E."/>
            <person name="Alexandrov N.A."/>
            <person name="Lu Y.-P."/>
            <person name="Flavell R.B."/>
            <person name="Feldmann K.A."/>
        </authorList>
    </citation>
    <scope>NUCLEOTIDE SEQUENCE [LARGE SCALE MRNA]</scope>
</reference>
<reference key="4">
    <citation type="journal article" date="2003" name="Plant Physiol.">
        <title>Identification of glycosylphosphatidylinositol-anchored proteins in Arabidopsis. A proteomic and genomic analysis.</title>
        <authorList>
            <person name="Borner G.H.H."/>
            <person name="Lilley K.S."/>
            <person name="Stevens T.J."/>
            <person name="Dupree P."/>
        </authorList>
    </citation>
    <scope>GPI-ANCHOR</scope>
    <scope>IDENTIFICATION BY MASS SPECTROMETRY</scope>
    <scope>GENE FAMILY</scope>
    <source>
        <strain>cv. Columbia</strain>
    </source>
</reference>
<reference key="5">
    <citation type="journal article" date="2007" name="Plant Physiol.">
        <title>An early nodulin-like protein accumulates in the sieve element plasma membrane of Arabidopsis.</title>
        <authorList>
            <person name="Khan J.A."/>
            <person name="Wang Q."/>
            <person name="Sjoelund R.D."/>
            <person name="Schulz A."/>
            <person name="Thompson G.A."/>
        </authorList>
    </citation>
    <scope>DEVELOPMENTAL STAGE</scope>
    <scope>TISSUE SPECIFICITY</scope>
</reference>
<reference key="6">
    <citation type="journal article" date="2009" name="Biosci. Biotechnol. Biochem.">
        <title>Genome-wide identification, structure and expression studies, and mutant collection of 22 early nodulin-like protein genes in Arabidopsis.</title>
        <authorList>
            <person name="Mashiguchi K."/>
            <person name="Asami T."/>
            <person name="Suzuki Y."/>
        </authorList>
    </citation>
    <scope>TISSUE SPECIFICITY</scope>
    <scope>GENE FAMILY</scope>
    <scope>NOMENCLATURE</scope>
    <source>
        <strain>cv. Columbia</strain>
    </source>
</reference>
<reference key="7">
    <citation type="journal article" date="2014" name="Plant Cell Physiol.">
        <title>Emerging functions of nodulin-like proteins in non-nodulating plant species.</title>
        <authorList>
            <person name="Denance N."/>
            <person name="Szurek B."/>
            <person name="Noel L.D."/>
        </authorList>
    </citation>
    <scope>REVIEW ON NODULIN-LIKE PROTEINS</scope>
</reference>
<reference key="8">
    <citation type="journal article" date="2016" name="Curr. Biol.">
        <title>Maternal ENODLs are required for pollen tube reception in Arabidopsis.</title>
        <authorList>
            <person name="Hou Y."/>
            <person name="Guo X."/>
            <person name="Cyprys P."/>
            <person name="Zhang Y."/>
            <person name="Bleckmann A."/>
            <person name="Cai L."/>
            <person name="Huang Q."/>
            <person name="Luo Y."/>
            <person name="Gu H."/>
            <person name="Dresselhaus T."/>
            <person name="Dong J."/>
            <person name="Qu L.-J."/>
        </authorList>
    </citation>
    <scope>FUNCTION</scope>
    <scope>DISRUPTION PHENOTYPE</scope>
</reference>
<dbReference type="EMBL" id="AC005964">
    <property type="status" value="NOT_ANNOTATED_CDS"/>
    <property type="molecule type" value="Genomic_DNA"/>
</dbReference>
<dbReference type="EMBL" id="CP002688">
    <property type="protein sequence ID" value="AED93398.1"/>
    <property type="molecule type" value="Genomic_DNA"/>
</dbReference>
<dbReference type="EMBL" id="AY086719">
    <property type="protein sequence ID" value="AAM63773.1"/>
    <property type="molecule type" value="mRNA"/>
</dbReference>
<dbReference type="RefSeq" id="NP_197891.1">
    <property type="nucleotide sequence ID" value="NM_122418.2"/>
</dbReference>
<dbReference type="SMR" id="Q8LC95"/>
<dbReference type="FunCoup" id="Q8LC95">
    <property type="interactions" value="38"/>
</dbReference>
<dbReference type="STRING" id="3702.Q8LC95"/>
<dbReference type="GlyGen" id="Q8LC95">
    <property type="glycosylation" value="2 sites"/>
</dbReference>
<dbReference type="PaxDb" id="3702-AT5G25090.1"/>
<dbReference type="ProteomicsDB" id="220320"/>
<dbReference type="EnsemblPlants" id="AT5G25090.1">
    <property type="protein sequence ID" value="AT5G25090.1"/>
    <property type="gene ID" value="AT5G25090"/>
</dbReference>
<dbReference type="GeneID" id="832580"/>
<dbReference type="Gramene" id="AT5G25090.1">
    <property type="protein sequence ID" value="AT5G25090.1"/>
    <property type="gene ID" value="AT5G25090"/>
</dbReference>
<dbReference type="KEGG" id="ath:AT5G25090"/>
<dbReference type="Araport" id="AT5G25090"/>
<dbReference type="TAIR" id="AT5G25090">
    <property type="gene designation" value="ENODL13"/>
</dbReference>
<dbReference type="eggNOG" id="ENOG502RZS4">
    <property type="taxonomic scope" value="Eukaryota"/>
</dbReference>
<dbReference type="HOGENOM" id="CLU_058719_1_2_1"/>
<dbReference type="InParanoid" id="Q8LC95"/>
<dbReference type="OMA" id="SNCIEGE"/>
<dbReference type="OrthoDB" id="1937044at2759"/>
<dbReference type="PhylomeDB" id="Q8LC95"/>
<dbReference type="CD-CODE" id="4299E36E">
    <property type="entry name" value="Nucleolus"/>
</dbReference>
<dbReference type="PRO" id="PR:Q8LC95"/>
<dbReference type="Proteomes" id="UP000006548">
    <property type="component" value="Chromosome 5"/>
</dbReference>
<dbReference type="ExpressionAtlas" id="Q8LC95">
    <property type="expression patterns" value="baseline and differential"/>
</dbReference>
<dbReference type="GO" id="GO:0005886">
    <property type="term" value="C:plasma membrane"/>
    <property type="evidence" value="ECO:0007005"/>
    <property type="project" value="TAIR"/>
</dbReference>
<dbReference type="GO" id="GO:0009506">
    <property type="term" value="C:plasmodesma"/>
    <property type="evidence" value="ECO:0007005"/>
    <property type="project" value="TAIR"/>
</dbReference>
<dbReference type="GO" id="GO:0009536">
    <property type="term" value="C:plastid"/>
    <property type="evidence" value="ECO:0007005"/>
    <property type="project" value="TAIR"/>
</dbReference>
<dbReference type="GO" id="GO:0098552">
    <property type="term" value="C:side of membrane"/>
    <property type="evidence" value="ECO:0007669"/>
    <property type="project" value="UniProtKB-KW"/>
</dbReference>
<dbReference type="GO" id="GO:0009055">
    <property type="term" value="F:electron transfer activity"/>
    <property type="evidence" value="ECO:0007669"/>
    <property type="project" value="InterPro"/>
</dbReference>
<dbReference type="CDD" id="cd11019">
    <property type="entry name" value="OsENODL1_like"/>
    <property type="match status" value="1"/>
</dbReference>
<dbReference type="FunFam" id="2.60.40.420:FF:000069">
    <property type="entry name" value="Early nodulin-like protein 1"/>
    <property type="match status" value="1"/>
</dbReference>
<dbReference type="Gene3D" id="2.60.40.420">
    <property type="entry name" value="Cupredoxins - blue copper proteins"/>
    <property type="match status" value="1"/>
</dbReference>
<dbReference type="InterPro" id="IPR008972">
    <property type="entry name" value="Cupredoxin"/>
</dbReference>
<dbReference type="InterPro" id="IPR041846">
    <property type="entry name" value="ENL_dom"/>
</dbReference>
<dbReference type="InterPro" id="IPR039391">
    <property type="entry name" value="Phytocyanin-like"/>
</dbReference>
<dbReference type="InterPro" id="IPR003245">
    <property type="entry name" value="Phytocyanin_dom"/>
</dbReference>
<dbReference type="PANTHER" id="PTHR33021">
    <property type="entry name" value="BLUE COPPER PROTEIN"/>
    <property type="match status" value="1"/>
</dbReference>
<dbReference type="PANTHER" id="PTHR33021:SF197">
    <property type="entry name" value="EARLY NODULIN-LIKE PROTEIN 13"/>
    <property type="match status" value="1"/>
</dbReference>
<dbReference type="Pfam" id="PF02298">
    <property type="entry name" value="Cu_bind_like"/>
    <property type="match status" value="1"/>
</dbReference>
<dbReference type="SUPFAM" id="SSF49503">
    <property type="entry name" value="Cupredoxins"/>
    <property type="match status" value="1"/>
</dbReference>
<dbReference type="PROSITE" id="PS51485">
    <property type="entry name" value="PHYTOCYANIN"/>
    <property type="match status" value="1"/>
</dbReference>
<gene>
    <name evidence="9" type="primary">ENODL13</name>
    <name evidence="9" type="synonym">EN13</name>
    <name evidence="12" type="ordered locus">At5g25090</name>
    <name evidence="13" type="ORF">T11H3.100</name>
</gene>